<sequence>MLKFQEAAKCVSGSTAISTYPKTLIARRYVLQQKLGSGSFGTVYLVSDKKAKRGEELKVLKEISVGELNPNETVQANLEAQLLSKLDHPAIVKFHASFVEQDNFCIITEYCEGRDLDDKIQEYKQAGKIFPENQIIEWFIQLLLGVDYMHERRILHRDLKSKNVFLKNNLLKIGDFGVSRLLMGSCDLATTLTGTPHYMSPEALKHQGYDTKSDIWSLACILYEMCCMNHAFAGSNFLSIVLKIVEGDTPSLPERYPKELNAIMESMLNKNPSLRPSAIEILKIPYLDEQLQNLMCRYSEMTLEDKNLDCQKEAAHIINAMQKRIHLQTLRALSEVQKMTPRERMRLRKLQAADEKARKLKKIVEEKYEENSKRMQELRSRNFQQLSVDVLHEKTHLKGMEEKEEQPEGRLSCSPQDEDEERWQGREEESDEPTLENLPESQPIPSMDLHELESIVEDATSDLGYHEIPEDPLVAEEYYADAFDSYCEESDEEEEEIALERPEKEIRNEGSQPAYRTNQQDSDIEALARCLENVLGCTSLDTKTITTMAEDMSPGPPIFNSVMARTKMKRMRESAMQKLGTEVFEEVYNYLKRARHQNASEAEIRECLEKVVPQASDCFEVDQLLYFEEQLLITMGKEPTLQNHL</sequence>
<name>NEK11_HUMAN</name>
<protein>
    <recommendedName>
        <fullName>Serine/threonine-protein kinase Nek11</fullName>
        <ecNumber evidence="6 8">2.7.11.1</ecNumber>
    </recommendedName>
    <alternativeName>
        <fullName>Never in mitosis A-related kinase 11</fullName>
        <shortName>NimA-related protein kinase 11</shortName>
    </alternativeName>
</protein>
<reference evidence="16 19" key="1">
    <citation type="journal article" date="2002" name="J. Biol. Chem.">
        <title>Nek11, a new member of the NIMA family of kinases, involved in DNA replication and genotoxic stress responses.</title>
        <authorList>
            <person name="Noguchi K."/>
            <person name="Fukazawa H."/>
            <person name="Murakami Y."/>
            <person name="Uehara Y."/>
        </authorList>
    </citation>
    <scope>NUCLEOTIDE SEQUENCE [MRNA] (ISOFORMS 1 AND 2)</scope>
    <scope>FUNCTION</scope>
    <scope>CATALYTIC ACTIVITY</scope>
    <scope>COFACTOR</scope>
    <scope>ACTIVITY REGULATION</scope>
    <scope>DEVELOPMENTAL STAGE</scope>
    <scope>TISSUE SPECIFICITY</scope>
    <scope>SUBCELLULAR LOCATION</scope>
    <scope>MUTAGENESIS OF LYS-61</scope>
    <scope>VARIANT VAL-488</scope>
    <source>
        <tissue>Cervix carcinoma</tissue>
    </source>
</reference>
<reference key="2">
    <citation type="journal article" date="2007" name="BMC Genomics">
        <title>The full-ORF clone resource of the German cDNA consortium.</title>
        <authorList>
            <person name="Bechtel S."/>
            <person name="Rosenfelder H."/>
            <person name="Duda A."/>
            <person name="Schmidt C.P."/>
            <person name="Ernst U."/>
            <person name="Wellenreuther R."/>
            <person name="Mehrle A."/>
            <person name="Schuster C."/>
            <person name="Bahr A."/>
            <person name="Bloecker H."/>
            <person name="Heubner D."/>
            <person name="Hoerlein A."/>
            <person name="Michel G."/>
            <person name="Wedler H."/>
            <person name="Koehrer K."/>
            <person name="Ottenwaelder B."/>
            <person name="Poustka A."/>
            <person name="Wiemann S."/>
            <person name="Schupp I."/>
        </authorList>
    </citation>
    <scope>NUCLEOTIDE SEQUENCE [LARGE SCALE MRNA] (ISOFORM 4)</scope>
    <scope>VARIANT VAL-488</scope>
    <source>
        <tissue>Cervix</tissue>
    </source>
</reference>
<reference key="3">
    <citation type="journal article" date="2006" name="Nature">
        <title>The DNA sequence, annotation and analysis of human chromosome 3.</title>
        <authorList>
            <person name="Muzny D.M."/>
            <person name="Scherer S.E."/>
            <person name="Kaul R."/>
            <person name="Wang J."/>
            <person name="Yu J."/>
            <person name="Sudbrak R."/>
            <person name="Buhay C.J."/>
            <person name="Chen R."/>
            <person name="Cree A."/>
            <person name="Ding Y."/>
            <person name="Dugan-Rocha S."/>
            <person name="Gill R."/>
            <person name="Gunaratne P."/>
            <person name="Harris R.A."/>
            <person name="Hawes A.C."/>
            <person name="Hernandez J."/>
            <person name="Hodgson A.V."/>
            <person name="Hume J."/>
            <person name="Jackson A."/>
            <person name="Khan Z.M."/>
            <person name="Kovar-Smith C."/>
            <person name="Lewis L.R."/>
            <person name="Lozado R.J."/>
            <person name="Metzker M.L."/>
            <person name="Milosavljevic A."/>
            <person name="Miner G.R."/>
            <person name="Morgan M.B."/>
            <person name="Nazareth L.V."/>
            <person name="Scott G."/>
            <person name="Sodergren E."/>
            <person name="Song X.-Z."/>
            <person name="Steffen D."/>
            <person name="Wei S."/>
            <person name="Wheeler D.A."/>
            <person name="Wright M.W."/>
            <person name="Worley K.C."/>
            <person name="Yuan Y."/>
            <person name="Zhang Z."/>
            <person name="Adams C.Q."/>
            <person name="Ansari-Lari M.A."/>
            <person name="Ayele M."/>
            <person name="Brown M.J."/>
            <person name="Chen G."/>
            <person name="Chen Z."/>
            <person name="Clendenning J."/>
            <person name="Clerc-Blankenburg K.P."/>
            <person name="Chen R."/>
            <person name="Chen Z."/>
            <person name="Davis C."/>
            <person name="Delgado O."/>
            <person name="Dinh H.H."/>
            <person name="Dong W."/>
            <person name="Draper H."/>
            <person name="Ernst S."/>
            <person name="Fu G."/>
            <person name="Gonzalez-Garay M.L."/>
            <person name="Garcia D.K."/>
            <person name="Gillett W."/>
            <person name="Gu J."/>
            <person name="Hao B."/>
            <person name="Haugen E."/>
            <person name="Havlak P."/>
            <person name="He X."/>
            <person name="Hennig S."/>
            <person name="Hu S."/>
            <person name="Huang W."/>
            <person name="Jackson L.R."/>
            <person name="Jacob L.S."/>
            <person name="Kelly S.H."/>
            <person name="Kube M."/>
            <person name="Levy R."/>
            <person name="Li Z."/>
            <person name="Liu B."/>
            <person name="Liu J."/>
            <person name="Liu W."/>
            <person name="Lu J."/>
            <person name="Maheshwari M."/>
            <person name="Nguyen B.-V."/>
            <person name="Okwuonu G.O."/>
            <person name="Palmeiri A."/>
            <person name="Pasternak S."/>
            <person name="Perez L.M."/>
            <person name="Phelps K.A."/>
            <person name="Plopper F.J."/>
            <person name="Qiang B."/>
            <person name="Raymond C."/>
            <person name="Rodriguez R."/>
            <person name="Saenphimmachak C."/>
            <person name="Santibanez J."/>
            <person name="Shen H."/>
            <person name="Shen Y."/>
            <person name="Subramanian S."/>
            <person name="Tabor P.E."/>
            <person name="Verduzco D."/>
            <person name="Waldron L."/>
            <person name="Wang J."/>
            <person name="Wang J."/>
            <person name="Wang Q."/>
            <person name="Williams G.A."/>
            <person name="Wong G.K.-S."/>
            <person name="Yao Z."/>
            <person name="Zhang J."/>
            <person name="Zhang X."/>
            <person name="Zhao G."/>
            <person name="Zhou J."/>
            <person name="Zhou Y."/>
            <person name="Nelson D."/>
            <person name="Lehrach H."/>
            <person name="Reinhardt R."/>
            <person name="Naylor S.L."/>
            <person name="Yang H."/>
            <person name="Olson M."/>
            <person name="Weinstock G."/>
            <person name="Gibbs R.A."/>
        </authorList>
    </citation>
    <scope>NUCLEOTIDE SEQUENCE [LARGE SCALE GENOMIC DNA]</scope>
</reference>
<reference evidence="16 20" key="4">
    <citation type="submission" date="2005-09" db="EMBL/GenBank/DDBJ databases">
        <authorList>
            <person name="Mural R.J."/>
            <person name="Istrail S."/>
            <person name="Sutton G.G."/>
            <person name="Florea L."/>
            <person name="Halpern A.L."/>
            <person name="Mobarry C.M."/>
            <person name="Lippert R."/>
            <person name="Walenz B."/>
            <person name="Shatkay H."/>
            <person name="Dew I."/>
            <person name="Miller J.R."/>
            <person name="Flanigan M.J."/>
            <person name="Edwards N.J."/>
            <person name="Bolanos R."/>
            <person name="Fasulo D."/>
            <person name="Halldorsson B.V."/>
            <person name="Hannenhalli S."/>
            <person name="Turner R."/>
            <person name="Yooseph S."/>
            <person name="Lu F."/>
            <person name="Nusskern D.R."/>
            <person name="Shue B.C."/>
            <person name="Zheng X.H."/>
            <person name="Zhong F."/>
            <person name="Delcher A.L."/>
            <person name="Huson D.H."/>
            <person name="Kravitz S.A."/>
            <person name="Mouchard L."/>
            <person name="Reinert K."/>
            <person name="Remington K.A."/>
            <person name="Clark A.G."/>
            <person name="Waterman M.S."/>
            <person name="Eichler E.E."/>
            <person name="Adams M.D."/>
            <person name="Hunkapiller M.W."/>
            <person name="Myers E.W."/>
            <person name="Venter J.C."/>
        </authorList>
    </citation>
    <scope>NUCLEOTIDE SEQUENCE [LARGE SCALE GENOMIC DNA]</scope>
</reference>
<reference evidence="16 17" key="5">
    <citation type="journal article" date="2004" name="Genome Res.">
        <title>The status, quality, and expansion of the NIH full-length cDNA project: the Mammalian Gene Collection (MGC).</title>
        <authorList>
            <consortium name="The MGC Project Team"/>
        </authorList>
    </citation>
    <scope>NUCLEOTIDE SEQUENCE [LARGE SCALE MRNA] (ISOFORM 3)</scope>
    <source>
        <tissue evidence="17">Testis</tissue>
    </source>
</reference>
<reference evidence="16 18" key="6">
    <citation type="journal article" date="2004" name="Nat. Genet.">
        <title>Complete sequencing and characterization of 21,243 full-length human cDNAs.</title>
        <authorList>
            <person name="Ota T."/>
            <person name="Suzuki Y."/>
            <person name="Nishikawa T."/>
            <person name="Otsuki T."/>
            <person name="Sugiyama T."/>
            <person name="Irie R."/>
            <person name="Wakamatsu A."/>
            <person name="Hayashi K."/>
            <person name="Sato H."/>
            <person name="Nagai K."/>
            <person name="Kimura K."/>
            <person name="Makita H."/>
            <person name="Sekine M."/>
            <person name="Obayashi M."/>
            <person name="Nishi T."/>
            <person name="Shibahara T."/>
            <person name="Tanaka T."/>
            <person name="Ishii S."/>
            <person name="Yamamoto J."/>
            <person name="Saito K."/>
            <person name="Kawai Y."/>
            <person name="Isono Y."/>
            <person name="Nakamura Y."/>
            <person name="Nagahari K."/>
            <person name="Murakami K."/>
            <person name="Yasuda T."/>
            <person name="Iwayanagi T."/>
            <person name="Wagatsuma M."/>
            <person name="Shiratori A."/>
            <person name="Sudo H."/>
            <person name="Hosoiri T."/>
            <person name="Kaku Y."/>
            <person name="Kodaira H."/>
            <person name="Kondo H."/>
            <person name="Sugawara M."/>
            <person name="Takahashi M."/>
            <person name="Kanda K."/>
            <person name="Yokoi T."/>
            <person name="Furuya T."/>
            <person name="Kikkawa E."/>
            <person name="Omura Y."/>
            <person name="Abe K."/>
            <person name="Kamihara K."/>
            <person name="Katsuta N."/>
            <person name="Sato K."/>
            <person name="Tanikawa M."/>
            <person name="Yamazaki M."/>
            <person name="Ninomiya K."/>
            <person name="Ishibashi T."/>
            <person name="Yamashita H."/>
            <person name="Murakawa K."/>
            <person name="Fujimori K."/>
            <person name="Tanai H."/>
            <person name="Kimata M."/>
            <person name="Watanabe M."/>
            <person name="Hiraoka S."/>
            <person name="Chiba Y."/>
            <person name="Ishida S."/>
            <person name="Ono Y."/>
            <person name="Takiguchi S."/>
            <person name="Watanabe S."/>
            <person name="Yosida M."/>
            <person name="Hotuta T."/>
            <person name="Kusano J."/>
            <person name="Kanehori K."/>
            <person name="Takahashi-Fujii A."/>
            <person name="Hara H."/>
            <person name="Tanase T.-O."/>
            <person name="Nomura Y."/>
            <person name="Togiya S."/>
            <person name="Komai F."/>
            <person name="Hara R."/>
            <person name="Takeuchi K."/>
            <person name="Arita M."/>
            <person name="Imose N."/>
            <person name="Musashino K."/>
            <person name="Yuuki H."/>
            <person name="Oshima A."/>
            <person name="Sasaki N."/>
            <person name="Aotsuka S."/>
            <person name="Yoshikawa Y."/>
            <person name="Matsunawa H."/>
            <person name="Ichihara T."/>
            <person name="Shiohata N."/>
            <person name="Sano S."/>
            <person name="Moriya S."/>
            <person name="Momiyama H."/>
            <person name="Satoh N."/>
            <person name="Takami S."/>
            <person name="Terashima Y."/>
            <person name="Suzuki O."/>
            <person name="Nakagawa S."/>
            <person name="Senoh A."/>
            <person name="Mizoguchi H."/>
            <person name="Goto Y."/>
            <person name="Shimizu F."/>
            <person name="Wakebe H."/>
            <person name="Hishigaki H."/>
            <person name="Watanabe T."/>
            <person name="Sugiyama A."/>
            <person name="Takemoto M."/>
            <person name="Kawakami B."/>
            <person name="Yamazaki M."/>
            <person name="Watanabe K."/>
            <person name="Kumagai A."/>
            <person name="Itakura S."/>
            <person name="Fukuzumi Y."/>
            <person name="Fujimori Y."/>
            <person name="Komiyama M."/>
            <person name="Tashiro H."/>
            <person name="Tanigami A."/>
            <person name="Fujiwara T."/>
            <person name="Ono T."/>
            <person name="Yamada K."/>
            <person name="Fujii Y."/>
            <person name="Ozaki K."/>
            <person name="Hirao M."/>
            <person name="Ohmori Y."/>
            <person name="Kawabata A."/>
            <person name="Hikiji T."/>
            <person name="Kobatake N."/>
            <person name="Inagaki H."/>
            <person name="Ikema Y."/>
            <person name="Okamoto S."/>
            <person name="Okitani R."/>
            <person name="Kawakami T."/>
            <person name="Noguchi S."/>
            <person name="Itoh T."/>
            <person name="Shigeta K."/>
            <person name="Senba T."/>
            <person name="Matsumura K."/>
            <person name="Nakajima Y."/>
            <person name="Mizuno T."/>
            <person name="Morinaga M."/>
            <person name="Sasaki M."/>
            <person name="Togashi T."/>
            <person name="Oyama M."/>
            <person name="Hata H."/>
            <person name="Watanabe M."/>
            <person name="Komatsu T."/>
            <person name="Mizushima-Sugano J."/>
            <person name="Satoh T."/>
            <person name="Shirai Y."/>
            <person name="Takahashi Y."/>
            <person name="Nakagawa K."/>
            <person name="Okumura K."/>
            <person name="Nagase T."/>
            <person name="Nomura N."/>
            <person name="Kikuchi H."/>
            <person name="Masuho Y."/>
            <person name="Yamashita R."/>
            <person name="Nakai K."/>
            <person name="Yada T."/>
            <person name="Nakamura Y."/>
            <person name="Ohara O."/>
            <person name="Isogai T."/>
            <person name="Sugano S."/>
        </authorList>
    </citation>
    <scope>NUCLEOTIDE SEQUENCE [LARGE SCALE MRNA] OF 162-645 (ISOFORM 1)</scope>
    <scope>VARIANT VAL-488</scope>
    <source>
        <tissue evidence="18">Lung</tissue>
    </source>
</reference>
<reference evidence="16" key="7">
    <citation type="journal article" date="2004" name="J. Biol. Chem.">
        <title>Nucleolar Nek11 is a novel target of Nek2A in G1/S-arrested cells.</title>
        <authorList>
            <person name="Noguchi K."/>
            <person name="Fukazawa H."/>
            <person name="Murakami Y."/>
            <person name="Uehara Y."/>
        </authorList>
    </citation>
    <scope>CATALYTIC ACTIVITY</scope>
    <scope>COFACTOR</scope>
    <scope>SUBCELLULAR LOCATION</scope>
    <scope>ACTIVITY REGULATION</scope>
    <scope>INTERACTION WITH NEK2</scope>
</reference>
<reference key="8">
    <citation type="journal article" date="2009" name="Nat. Cell Biol.">
        <title>NEK11 regulates CDC25A degradation and the IR-induced G2/M checkpoint.</title>
        <authorList>
            <person name="Melixetian M."/>
            <person name="Klein D.K."/>
            <person name="Soerensen C.S."/>
            <person name="Helin K."/>
        </authorList>
    </citation>
    <scope>FUNCTION</scope>
    <scope>PHOSPHORYLATION AT SER-273</scope>
</reference>
<reference key="9">
    <citation type="journal article" date="2010" name="Cell Cycle">
        <title>NEK11: linking CHK1 and CDC25A in DNA damage checkpoint signaling.</title>
        <authorList>
            <person name="Soerensen C.S."/>
            <person name="Melixetian M."/>
            <person name="Klein D.K."/>
            <person name="Helin K."/>
        </authorList>
    </citation>
    <scope>FUNCTION</scope>
    <scope>PHOSPHORYLATION AT SER-273</scope>
</reference>
<reference key="10">
    <citation type="journal article" date="2007" name="Nature">
        <title>Patterns of somatic mutation in human cancer genomes.</title>
        <authorList>
            <person name="Greenman C."/>
            <person name="Stephens P."/>
            <person name="Smith R."/>
            <person name="Dalgliesh G.L."/>
            <person name="Hunter C."/>
            <person name="Bignell G."/>
            <person name="Davies H."/>
            <person name="Teague J."/>
            <person name="Butler A."/>
            <person name="Stevens C."/>
            <person name="Edkins S."/>
            <person name="O'Meara S."/>
            <person name="Vastrik I."/>
            <person name="Schmidt E.E."/>
            <person name="Avis T."/>
            <person name="Barthorpe S."/>
            <person name="Bhamra G."/>
            <person name="Buck G."/>
            <person name="Choudhury B."/>
            <person name="Clements J."/>
            <person name="Cole J."/>
            <person name="Dicks E."/>
            <person name="Forbes S."/>
            <person name="Gray K."/>
            <person name="Halliday K."/>
            <person name="Harrison R."/>
            <person name="Hills K."/>
            <person name="Hinton J."/>
            <person name="Jenkinson A."/>
            <person name="Jones D."/>
            <person name="Menzies A."/>
            <person name="Mironenko T."/>
            <person name="Perry J."/>
            <person name="Raine K."/>
            <person name="Richardson D."/>
            <person name="Shepherd R."/>
            <person name="Small A."/>
            <person name="Tofts C."/>
            <person name="Varian J."/>
            <person name="Webb T."/>
            <person name="West S."/>
            <person name="Widaa S."/>
            <person name="Yates A."/>
            <person name="Cahill D.P."/>
            <person name="Louis D.N."/>
            <person name="Goldstraw P."/>
            <person name="Nicholson A.G."/>
            <person name="Brasseur F."/>
            <person name="Looijenga L."/>
            <person name="Weber B.L."/>
            <person name="Chiew Y.-E."/>
            <person name="DeFazio A."/>
            <person name="Greaves M.F."/>
            <person name="Green A.R."/>
            <person name="Campbell P."/>
            <person name="Birney E."/>
            <person name="Easton D.F."/>
            <person name="Chenevix-Trench G."/>
            <person name="Tan M.-H."/>
            <person name="Khoo S.K."/>
            <person name="Teh B.T."/>
            <person name="Yuen S.T."/>
            <person name="Leung S.Y."/>
            <person name="Wooster R."/>
            <person name="Futreal P.A."/>
            <person name="Stratton M.R."/>
        </authorList>
    </citation>
    <scope>VARIANTS [LARGE SCALE ANALYSIS] MET-108; CYS-123; LEU-213; VAL-263; LYS-451; VAL-488; LYS-492; THR-548; ALA-562; LYS-606 AND ASN-617</scope>
</reference>
<gene>
    <name evidence="21" type="primary">NEK11</name>
</gene>
<dbReference type="EC" id="2.7.11.1" evidence="6 8"/>
<dbReference type="EMBL" id="AB071996">
    <property type="protein sequence ID" value="BAC06350.1"/>
    <property type="molecule type" value="mRNA"/>
</dbReference>
<dbReference type="EMBL" id="AB071997">
    <property type="protein sequence ID" value="BAC06351.1"/>
    <property type="molecule type" value="mRNA"/>
</dbReference>
<dbReference type="EMBL" id="AL833472">
    <property type="protein sequence ID" value="CAI46114.1"/>
    <property type="molecule type" value="mRNA"/>
</dbReference>
<dbReference type="EMBL" id="AC055733">
    <property type="status" value="NOT_ANNOTATED_CDS"/>
    <property type="molecule type" value="Genomic_DNA"/>
</dbReference>
<dbReference type="EMBL" id="CH471052">
    <property type="protein sequence ID" value="EAW79213.1"/>
    <property type="molecule type" value="Genomic_DNA"/>
</dbReference>
<dbReference type="EMBL" id="BC028587">
    <property type="protein sequence ID" value="AAH28587.1"/>
    <property type="molecule type" value="mRNA"/>
</dbReference>
<dbReference type="EMBL" id="AK027148">
    <property type="protein sequence ID" value="BAB15672.1"/>
    <property type="status" value="ALT_INIT"/>
    <property type="molecule type" value="mRNA"/>
</dbReference>
<dbReference type="CCDS" id="CCDS3069.1">
    <molecule id="Q8NG66-1"/>
</dbReference>
<dbReference type="CCDS" id="CCDS46915.1">
    <molecule id="Q8NG66-2"/>
</dbReference>
<dbReference type="CCDS" id="CCDS54639.1">
    <molecule id="Q8NG66-4"/>
</dbReference>
<dbReference type="CCDS" id="CCDS82836.1">
    <molecule id="Q8NG66-3"/>
</dbReference>
<dbReference type="RefSeq" id="NP_001139475.1">
    <molecule id="Q8NG66-4"/>
    <property type="nucleotide sequence ID" value="NM_001146003.2"/>
</dbReference>
<dbReference type="RefSeq" id="NP_001308149.1">
    <molecule id="Q8NG66-1"/>
    <property type="nucleotide sequence ID" value="NM_001321220.2"/>
</dbReference>
<dbReference type="RefSeq" id="NP_001308150.1">
    <property type="nucleotide sequence ID" value="NM_001321221.1"/>
</dbReference>
<dbReference type="RefSeq" id="NP_001308151.1">
    <property type="nucleotide sequence ID" value="NM_001321222.1"/>
</dbReference>
<dbReference type="RefSeq" id="NP_001308152.1">
    <molecule id="Q8NG66-3"/>
    <property type="nucleotide sequence ID" value="NM_001321223.1"/>
</dbReference>
<dbReference type="RefSeq" id="NP_001308153.1">
    <property type="nucleotide sequence ID" value="NM_001321224.1"/>
</dbReference>
<dbReference type="RefSeq" id="NP_001339952.1">
    <molecule id="Q8NG66-1"/>
    <property type="nucleotide sequence ID" value="NM_001353023.2"/>
</dbReference>
<dbReference type="RefSeq" id="NP_001339957.1">
    <molecule id="Q8NG66-4"/>
    <property type="nucleotide sequence ID" value="NM_001353028.2"/>
</dbReference>
<dbReference type="RefSeq" id="NP_001339958.1">
    <molecule id="Q8NG66-4"/>
    <property type="nucleotide sequence ID" value="NM_001353029.2"/>
</dbReference>
<dbReference type="RefSeq" id="NP_079076.3">
    <molecule id="Q8NG66-1"/>
    <property type="nucleotide sequence ID" value="NM_024800.4"/>
</dbReference>
<dbReference type="RefSeq" id="NP_665917.1">
    <molecule id="Q8NG66-2"/>
    <property type="nucleotide sequence ID" value="NM_145910.4"/>
</dbReference>
<dbReference type="RefSeq" id="XP_011511469.1">
    <property type="nucleotide sequence ID" value="XM_011513167.2"/>
</dbReference>
<dbReference type="RefSeq" id="XP_016862702.1">
    <property type="nucleotide sequence ID" value="XM_017007213.1"/>
</dbReference>
<dbReference type="RefSeq" id="XP_016862703.1">
    <property type="nucleotide sequence ID" value="XM_017007214.1"/>
</dbReference>
<dbReference type="RefSeq" id="XP_047304926.1">
    <molecule id="Q8NG66-1"/>
    <property type="nucleotide sequence ID" value="XM_047448970.1"/>
</dbReference>
<dbReference type="RefSeq" id="XP_047304927.1">
    <molecule id="Q8NG66-1"/>
    <property type="nucleotide sequence ID" value="XM_047448971.1"/>
</dbReference>
<dbReference type="RefSeq" id="XP_047304928.1">
    <molecule id="Q8NG66-1"/>
    <property type="nucleotide sequence ID" value="XM_047448972.1"/>
</dbReference>
<dbReference type="RefSeq" id="XP_047304935.1">
    <molecule id="Q8NG66-2"/>
    <property type="nucleotide sequence ID" value="XM_047448979.1"/>
</dbReference>
<dbReference type="RefSeq" id="XP_054203914.1">
    <molecule id="Q8NG66-2"/>
    <property type="nucleotide sequence ID" value="XM_054347939.1"/>
</dbReference>
<dbReference type="SMR" id="Q8NG66"/>
<dbReference type="BioGRID" id="122947">
    <property type="interactions" value="35"/>
</dbReference>
<dbReference type="CORUM" id="Q8NG66"/>
<dbReference type="FunCoup" id="Q8NG66">
    <property type="interactions" value="986"/>
</dbReference>
<dbReference type="IntAct" id="Q8NG66">
    <property type="interactions" value="16"/>
</dbReference>
<dbReference type="STRING" id="9606.ENSP00000372857"/>
<dbReference type="BindingDB" id="Q8NG66"/>
<dbReference type="ChEMBL" id="CHEMBL5638"/>
<dbReference type="DrugBank" id="DB08912">
    <property type="generic name" value="Dabrafenib"/>
</dbReference>
<dbReference type="DrugBank" id="DB12010">
    <property type="generic name" value="Fostamatinib"/>
</dbReference>
<dbReference type="DrugCentral" id="Q8NG66"/>
<dbReference type="GuidetoPHARMACOLOGY" id="2116"/>
<dbReference type="iPTMnet" id="Q8NG66"/>
<dbReference type="PhosphoSitePlus" id="Q8NG66"/>
<dbReference type="BioMuta" id="NEK11"/>
<dbReference type="DMDM" id="313104142"/>
<dbReference type="CPTAC" id="non-CPTAC-5648"/>
<dbReference type="CPTAC" id="non-CPTAC-5649"/>
<dbReference type="jPOST" id="Q8NG66"/>
<dbReference type="MassIVE" id="Q8NG66"/>
<dbReference type="PaxDb" id="9606-ENSP00000372857"/>
<dbReference type="PeptideAtlas" id="Q8NG66"/>
<dbReference type="ProteomicsDB" id="73438">
    <molecule id="Q8NG66-1"/>
</dbReference>
<dbReference type="ProteomicsDB" id="73439">
    <molecule id="Q8NG66-2"/>
</dbReference>
<dbReference type="ProteomicsDB" id="73440">
    <molecule id="Q8NG66-3"/>
</dbReference>
<dbReference type="ProteomicsDB" id="73441">
    <molecule id="Q8NG66-4"/>
</dbReference>
<dbReference type="Antibodypedia" id="2071">
    <property type="antibodies" value="293 antibodies from 25 providers"/>
</dbReference>
<dbReference type="DNASU" id="79858"/>
<dbReference type="Ensembl" id="ENST00000356918.8">
    <molecule id="Q8NG66-2"/>
    <property type="protein sequence ID" value="ENSP00000349389.5"/>
    <property type="gene ID" value="ENSG00000114670.14"/>
</dbReference>
<dbReference type="Ensembl" id="ENST00000383366.9">
    <molecule id="Q8NG66-1"/>
    <property type="protein sequence ID" value="ENSP00000372857.4"/>
    <property type="gene ID" value="ENSG00000114670.14"/>
</dbReference>
<dbReference type="Ensembl" id="ENST00000507910.5">
    <molecule id="Q8NG66-3"/>
    <property type="protein sequence ID" value="ENSP00000426662.1"/>
    <property type="gene ID" value="ENSG00000114670.14"/>
</dbReference>
<dbReference type="Ensembl" id="ENST00000508196.5">
    <molecule id="Q8NG66-1"/>
    <property type="protein sequence ID" value="ENSP00000421851.1"/>
    <property type="gene ID" value="ENSG00000114670.14"/>
</dbReference>
<dbReference type="Ensembl" id="ENST00000510688.5">
    <molecule id="Q8NG66-4"/>
    <property type="protein sequence ID" value="ENSP00000423458.1"/>
    <property type="gene ID" value="ENSG00000114670.14"/>
</dbReference>
<dbReference type="Ensembl" id="ENST00000511262.5">
    <molecule id="Q8NG66-2"/>
    <property type="protein sequence ID" value="ENSP00000425114.1"/>
    <property type="gene ID" value="ENSG00000114670.14"/>
</dbReference>
<dbReference type="GeneID" id="79858"/>
<dbReference type="KEGG" id="hsa:79858"/>
<dbReference type="MANE-Select" id="ENST00000383366.9">
    <property type="protein sequence ID" value="ENSP00000372857.4"/>
    <property type="RefSeq nucleotide sequence ID" value="NM_024800.5"/>
    <property type="RefSeq protein sequence ID" value="NP_079076.3"/>
</dbReference>
<dbReference type="UCSC" id="uc003enx.4">
    <molecule id="Q8NG66-1"/>
    <property type="organism name" value="human"/>
</dbReference>
<dbReference type="AGR" id="HGNC:18593"/>
<dbReference type="CTD" id="79858"/>
<dbReference type="DisGeNET" id="79858"/>
<dbReference type="GeneCards" id="NEK11"/>
<dbReference type="HGNC" id="HGNC:18593">
    <property type="gene designation" value="NEK11"/>
</dbReference>
<dbReference type="HPA" id="ENSG00000114670">
    <property type="expression patterns" value="Tissue enhanced (choroid)"/>
</dbReference>
<dbReference type="MIM" id="609779">
    <property type="type" value="gene"/>
</dbReference>
<dbReference type="neXtProt" id="NX_Q8NG66"/>
<dbReference type="OpenTargets" id="ENSG00000114670"/>
<dbReference type="PharmGKB" id="PA38595"/>
<dbReference type="VEuPathDB" id="HostDB:ENSG00000114670"/>
<dbReference type="eggNOG" id="KOG0589">
    <property type="taxonomic scope" value="Eukaryota"/>
</dbReference>
<dbReference type="GeneTree" id="ENSGT00940000160525"/>
<dbReference type="HOGENOM" id="CLU_000288_63_39_1"/>
<dbReference type="InParanoid" id="Q8NG66"/>
<dbReference type="OrthoDB" id="248923at2759"/>
<dbReference type="PAN-GO" id="Q8NG66">
    <property type="GO annotations" value="8 GO annotations based on evolutionary models"/>
</dbReference>
<dbReference type="PhylomeDB" id="Q8NG66"/>
<dbReference type="TreeFam" id="TF106472"/>
<dbReference type="PathwayCommons" id="Q8NG66"/>
<dbReference type="SignaLink" id="Q8NG66"/>
<dbReference type="SIGNOR" id="Q8NG66"/>
<dbReference type="BioGRID-ORCS" id="79858">
    <property type="hits" value="11 hits in 1182 CRISPR screens"/>
</dbReference>
<dbReference type="CD-CODE" id="91857CE7">
    <property type="entry name" value="Nucleolus"/>
</dbReference>
<dbReference type="ChiTaRS" id="NEK11">
    <property type="organism name" value="human"/>
</dbReference>
<dbReference type="GenomeRNAi" id="79858"/>
<dbReference type="Pharos" id="Q8NG66">
    <property type="development level" value="Tchem"/>
</dbReference>
<dbReference type="PRO" id="PR:Q8NG66"/>
<dbReference type="Proteomes" id="UP000005640">
    <property type="component" value="Chromosome 3"/>
</dbReference>
<dbReference type="RNAct" id="Q8NG66">
    <property type="molecule type" value="protein"/>
</dbReference>
<dbReference type="Bgee" id="ENSG00000114670">
    <property type="expression patterns" value="Expressed in right uterine tube and 137 other cell types or tissues"/>
</dbReference>
<dbReference type="ExpressionAtlas" id="Q8NG66">
    <property type="expression patterns" value="baseline and differential"/>
</dbReference>
<dbReference type="GO" id="GO:0005730">
    <property type="term" value="C:nucleolus"/>
    <property type="evidence" value="ECO:0000314"/>
    <property type="project" value="UniProtKB"/>
</dbReference>
<dbReference type="GO" id="GO:0005654">
    <property type="term" value="C:nucleoplasm"/>
    <property type="evidence" value="ECO:0000314"/>
    <property type="project" value="HPA"/>
</dbReference>
<dbReference type="GO" id="GO:0005634">
    <property type="term" value="C:nucleus"/>
    <property type="evidence" value="ECO:0000318"/>
    <property type="project" value="GO_Central"/>
</dbReference>
<dbReference type="GO" id="GO:0005524">
    <property type="term" value="F:ATP binding"/>
    <property type="evidence" value="ECO:0000314"/>
    <property type="project" value="UniProtKB"/>
</dbReference>
<dbReference type="GO" id="GO:0046872">
    <property type="term" value="F:metal ion binding"/>
    <property type="evidence" value="ECO:0007669"/>
    <property type="project" value="UniProtKB-KW"/>
</dbReference>
<dbReference type="GO" id="GO:0106310">
    <property type="term" value="F:protein serine kinase activity"/>
    <property type="evidence" value="ECO:0007669"/>
    <property type="project" value="RHEA"/>
</dbReference>
<dbReference type="GO" id="GO:0004674">
    <property type="term" value="F:protein serine/threonine kinase activity"/>
    <property type="evidence" value="ECO:0000314"/>
    <property type="project" value="UniProtKB"/>
</dbReference>
<dbReference type="GO" id="GO:0035556">
    <property type="term" value="P:intracellular signal transduction"/>
    <property type="evidence" value="ECO:0000314"/>
    <property type="project" value="UniProtKB"/>
</dbReference>
<dbReference type="GO" id="GO:0031573">
    <property type="term" value="P:mitotic intra-S DNA damage checkpoint signaling"/>
    <property type="evidence" value="ECO:0000314"/>
    <property type="project" value="UniProtKB"/>
</dbReference>
<dbReference type="GO" id="GO:0006468">
    <property type="term" value="P:protein phosphorylation"/>
    <property type="evidence" value="ECO:0000314"/>
    <property type="project" value="UniProtKB"/>
</dbReference>
<dbReference type="GO" id="GO:1901990">
    <property type="term" value="P:regulation of mitotic cell cycle phase transition"/>
    <property type="evidence" value="ECO:0000315"/>
    <property type="project" value="CACAO"/>
</dbReference>
<dbReference type="CDD" id="cd08222">
    <property type="entry name" value="STKc_Nek11"/>
    <property type="match status" value="1"/>
</dbReference>
<dbReference type="FunFam" id="1.10.510.10:FF:000436">
    <property type="entry name" value="NIMA related kinase 11"/>
    <property type="match status" value="1"/>
</dbReference>
<dbReference type="FunFam" id="3.30.200.20:FF:000332">
    <property type="entry name" value="NIMA related kinase 11"/>
    <property type="match status" value="1"/>
</dbReference>
<dbReference type="Gene3D" id="3.30.200.20">
    <property type="entry name" value="Phosphorylase Kinase, domain 1"/>
    <property type="match status" value="1"/>
</dbReference>
<dbReference type="Gene3D" id="1.10.510.10">
    <property type="entry name" value="Transferase(Phosphotransferase) domain 1"/>
    <property type="match status" value="1"/>
</dbReference>
<dbReference type="InterPro" id="IPR011009">
    <property type="entry name" value="Kinase-like_dom_sf"/>
</dbReference>
<dbReference type="InterPro" id="IPR051131">
    <property type="entry name" value="NEK_Ser/Thr_kinase_NIMA"/>
</dbReference>
<dbReference type="InterPro" id="IPR000719">
    <property type="entry name" value="Prot_kinase_dom"/>
</dbReference>
<dbReference type="InterPro" id="IPR008271">
    <property type="entry name" value="Ser/Thr_kinase_AS"/>
</dbReference>
<dbReference type="PANTHER" id="PTHR44899">
    <property type="entry name" value="CAMK FAMILY PROTEIN KINASE"/>
    <property type="match status" value="1"/>
</dbReference>
<dbReference type="PANTHER" id="PTHR44899:SF8">
    <property type="entry name" value="NIMA-RELATED KINASE 11"/>
    <property type="match status" value="1"/>
</dbReference>
<dbReference type="Pfam" id="PF00069">
    <property type="entry name" value="Pkinase"/>
    <property type="match status" value="1"/>
</dbReference>
<dbReference type="SMART" id="SM00220">
    <property type="entry name" value="S_TKc"/>
    <property type="match status" value="1"/>
</dbReference>
<dbReference type="SUPFAM" id="SSF56112">
    <property type="entry name" value="Protein kinase-like (PK-like)"/>
    <property type="match status" value="1"/>
</dbReference>
<dbReference type="PROSITE" id="PS50011">
    <property type="entry name" value="PROTEIN_KINASE_DOM"/>
    <property type="match status" value="1"/>
</dbReference>
<dbReference type="PROSITE" id="PS00108">
    <property type="entry name" value="PROTEIN_KINASE_ST"/>
    <property type="match status" value="1"/>
</dbReference>
<comment type="function">
    <text evidence="6 11 12">Protein kinase which plays an important role in the G2/M checkpoint response to DNA damage. Controls degradation of CDC25A by directly phosphorylating it on residues whose phosphorylation is required for BTRC-mediated polyubiquitination and degradation.</text>
</comment>
<comment type="catalytic activity">
    <reaction evidence="6 8">
        <text>L-seryl-[protein] + ATP = O-phospho-L-seryl-[protein] + ADP + H(+)</text>
        <dbReference type="Rhea" id="RHEA:17989"/>
        <dbReference type="Rhea" id="RHEA-COMP:9863"/>
        <dbReference type="Rhea" id="RHEA-COMP:11604"/>
        <dbReference type="ChEBI" id="CHEBI:15378"/>
        <dbReference type="ChEBI" id="CHEBI:29999"/>
        <dbReference type="ChEBI" id="CHEBI:30616"/>
        <dbReference type="ChEBI" id="CHEBI:83421"/>
        <dbReference type="ChEBI" id="CHEBI:456216"/>
        <dbReference type="EC" id="2.7.11.1"/>
    </reaction>
</comment>
<comment type="catalytic activity">
    <reaction evidence="6 8">
        <text>L-threonyl-[protein] + ATP = O-phospho-L-threonyl-[protein] + ADP + H(+)</text>
        <dbReference type="Rhea" id="RHEA:46608"/>
        <dbReference type="Rhea" id="RHEA-COMP:11060"/>
        <dbReference type="Rhea" id="RHEA-COMP:11605"/>
        <dbReference type="ChEBI" id="CHEBI:15378"/>
        <dbReference type="ChEBI" id="CHEBI:30013"/>
        <dbReference type="ChEBI" id="CHEBI:30616"/>
        <dbReference type="ChEBI" id="CHEBI:61977"/>
        <dbReference type="ChEBI" id="CHEBI:456216"/>
        <dbReference type="EC" id="2.7.11.1"/>
    </reaction>
</comment>
<comment type="cofactor">
    <cofactor evidence="6 8">
        <name>Mn(2+)</name>
        <dbReference type="ChEBI" id="CHEBI:29035"/>
    </cofactor>
    <cofactor evidence="6 8">
        <name>Mg(2+)</name>
        <dbReference type="ChEBI" id="CHEBI:18420"/>
    </cofactor>
</comment>
<comment type="activity regulation">
    <text evidence="6 8">Autorepressed by intramolecular binding of the C-terminus which dissociates following phosphorylation by NEK2 isoform 1 in G1/S-arrested cells. NEK2 isoform 2 is largely not present in the nucleolus, and does not appear to phosphorylate NEK11. Activated in response to DNA damage. Inhibited by zinc.</text>
</comment>
<comment type="subunit">
    <text evidence="8">Interacts with isoform 1 of NEK2.</text>
</comment>
<comment type="interaction">
    <interactant intactId="EBI-633195">
        <id>Q8NG66</id>
    </interactant>
    <interactant intactId="EBI-352572">
        <id>P08238</id>
        <label>HSP90AB1</label>
    </interactant>
    <organismsDiffer>false</organismsDiffer>
    <experiments>2</experiments>
</comment>
<comment type="interaction">
    <interactant intactId="EBI-633195">
        <id>Q8NG66</id>
    </interactant>
    <interactant intactId="EBI-633182">
        <id>P51955</id>
        <label>NEK2</label>
    </interactant>
    <organismsDiffer>false</organismsDiffer>
    <experiments>5</experiments>
</comment>
<comment type="interaction">
    <interactant intactId="EBI-633195">
        <id>Q8NG66</id>
    </interactant>
    <interactant intactId="EBI-687792">
        <id>P51955-1</id>
        <label>NEK2</label>
    </interactant>
    <organismsDiffer>false</organismsDiffer>
    <experiments>2</experiments>
</comment>
<comment type="subcellular location">
    <subcellularLocation>
        <location evidence="6">Nucleus</location>
    </subcellularLocation>
    <subcellularLocation>
        <location evidence="8">Nucleus</location>
        <location evidence="8">Nucleolus</location>
    </subcellularLocation>
    <text evidence="6 8">Nuclear during interphase but moves to the polar microtubules during prometaphase and metaphase (PubMed:12154088). Accumulates in the nucleolus in G1/S-arrested cells (PubMed:15161910).</text>
</comment>
<comment type="alternative products">
    <event type="alternative splicing"/>
    <isoform>
        <id>Q8NG66-1</id>
        <name evidence="6">1</name>
        <name evidence="13">Long</name>
        <sequence type="displayed"/>
    </isoform>
    <isoform>
        <id>Q8NG66-2</id>
        <name evidence="6">2</name>
        <name evidence="13">Short</name>
        <sequence type="described" ref="VSP_051821 VSP_051822"/>
    </isoform>
    <isoform>
        <id>Q8NG66-3</id>
        <name evidence="16">3</name>
        <sequence type="described" ref="VSP_051820 VSP_051823"/>
    </isoform>
    <isoform>
        <id>Q8NG66-4</id>
        <name>4</name>
        <sequence type="described" ref="VSP_040080 VSP_040081"/>
    </isoform>
</comment>
<comment type="tissue specificity">
    <text evidence="6">Poorly expressed in cerebellum, trachea, lung, appendix, and uterus.</text>
</comment>
<comment type="developmental stage">
    <text evidence="6">Predominantly expressed at S/G2/M phase.</text>
</comment>
<comment type="PTM">
    <text evidence="11 12">Phosphorylated by NEK2. Phosphorylation at Ser-273 is important for its activation.</text>
</comment>
<comment type="similarity">
    <text evidence="16">Belongs to the protein kinase superfamily. NEK Ser/Thr protein kinase family. NIMA subfamily.</text>
</comment>
<comment type="sequence caution" evidence="16">
    <conflict type="erroneous initiation">
        <sequence resource="EMBL-CDS" id="BAB15672"/>
    </conflict>
    <text>Truncated N-terminus.</text>
</comment>
<evidence type="ECO:0000250" key="1">
    <source>
        <dbReference type="UniProtKB" id="P51957"/>
    </source>
</evidence>
<evidence type="ECO:0000255" key="2"/>
<evidence type="ECO:0000255" key="3">
    <source>
        <dbReference type="PROSITE-ProRule" id="PRU00159"/>
    </source>
</evidence>
<evidence type="ECO:0000255" key="4">
    <source>
        <dbReference type="PROSITE-ProRule" id="PRU10027"/>
    </source>
</evidence>
<evidence type="ECO:0000256" key="5">
    <source>
        <dbReference type="SAM" id="MobiDB-lite"/>
    </source>
</evidence>
<evidence type="ECO:0000269" key="6">
    <source>
    </source>
</evidence>
<evidence type="ECO:0000269" key="7">
    <source>
    </source>
</evidence>
<evidence type="ECO:0000269" key="8">
    <source>
    </source>
</evidence>
<evidence type="ECO:0000269" key="9">
    <source>
    </source>
</evidence>
<evidence type="ECO:0000269" key="10">
    <source>
    </source>
</evidence>
<evidence type="ECO:0000269" key="11">
    <source>
    </source>
</evidence>
<evidence type="ECO:0000269" key="12">
    <source>
    </source>
</evidence>
<evidence type="ECO:0000303" key="13">
    <source>
    </source>
</evidence>
<evidence type="ECO:0000303" key="14">
    <source>
    </source>
</evidence>
<evidence type="ECO:0000303" key="15">
    <source>
    </source>
</evidence>
<evidence type="ECO:0000305" key="16"/>
<evidence type="ECO:0000312" key="17">
    <source>
        <dbReference type="EMBL" id="AAH28587.1"/>
    </source>
</evidence>
<evidence type="ECO:0000312" key="18">
    <source>
        <dbReference type="EMBL" id="BAB15672.1"/>
    </source>
</evidence>
<evidence type="ECO:0000312" key="19">
    <source>
        <dbReference type="EMBL" id="BAC06350.1"/>
    </source>
</evidence>
<evidence type="ECO:0000312" key="20">
    <source>
        <dbReference type="EMBL" id="CAI46114.1"/>
    </source>
</evidence>
<evidence type="ECO:0000312" key="21">
    <source>
        <dbReference type="HGNC" id="HGNC:18593"/>
    </source>
</evidence>
<feature type="chain" id="PRO_0000086438" description="Serine/threonine-protein kinase Nek11">
    <location>
        <begin position="1"/>
        <end position="645"/>
    </location>
</feature>
<feature type="domain" description="Protein kinase" evidence="3">
    <location>
        <begin position="29"/>
        <end position="287"/>
    </location>
</feature>
<feature type="region of interest" description="Disordered" evidence="5">
    <location>
        <begin position="399"/>
        <end position="445"/>
    </location>
</feature>
<feature type="coiled-coil region" evidence="1 2">
    <location>
        <begin position="346"/>
        <end position="385"/>
    </location>
</feature>
<feature type="active site" description="Proton acceptor" evidence="1 3 4">
    <location>
        <position position="158"/>
    </location>
</feature>
<feature type="binding site" evidence="1 3">
    <location>
        <begin position="35"/>
        <end position="43"/>
    </location>
    <ligand>
        <name>ATP</name>
        <dbReference type="ChEBI" id="CHEBI:30616"/>
    </ligand>
</feature>
<feature type="binding site" evidence="3 6">
    <location>
        <position position="61"/>
    </location>
    <ligand>
        <name>ATP</name>
        <dbReference type="ChEBI" id="CHEBI:30616"/>
    </ligand>
</feature>
<feature type="modified residue" description="Phosphoserine; by CHEK1" evidence="11 12">
    <location>
        <position position="273"/>
    </location>
</feature>
<feature type="splice variant" id="VSP_051820" description="In isoform 3." evidence="14">
    <original>EIPEDPLVAEEYYADA</original>
    <variation>GDCNLISLDEYWKNEK</variation>
    <location>
        <begin position="467"/>
        <end position="482"/>
    </location>
</feature>
<feature type="splice variant" id="VSP_051821" description="In isoform 2." evidence="13">
    <original>EIPE</original>
    <variation>ATHS</variation>
    <location>
        <begin position="467"/>
        <end position="470"/>
    </location>
</feature>
<feature type="splice variant" id="VSP_051822" description="In isoform 2." evidence="13">
    <location>
        <begin position="471"/>
        <end position="645"/>
    </location>
</feature>
<feature type="splice variant" id="VSP_051823" description="In isoform 3." evidence="14">
    <location>
        <begin position="483"/>
        <end position="645"/>
    </location>
</feature>
<feature type="splice variant" id="VSP_040080" description="In isoform 4." evidence="15">
    <original>TKTITTMAEDMSPGPPIFNSVMARTKMKRMRESAMQKLGTEVFEEVYNYLKRARHQNA</original>
    <variation>QPCRSWGQKYLKRSIITSREQGIRMLAKQRSASVWKKWCLKPATVLKWTSSCTLKSSC</variation>
    <location>
        <begin position="542"/>
        <end position="599"/>
    </location>
</feature>
<feature type="splice variant" id="VSP_040081" description="In isoform 4." evidence="15">
    <location>
        <begin position="600"/>
        <end position="645"/>
    </location>
</feature>
<feature type="sequence variant" id="VAR_040935" description="In a colorectal adenocarcinoma sample; somatic mutation; dbSNP:rs200709914." evidence="9">
    <original>T</original>
    <variation>M</variation>
    <location>
        <position position="108"/>
    </location>
</feature>
<feature type="sequence variant" id="VAR_040936" description="In dbSNP:rs55806123." evidence="9">
    <original>Y</original>
    <variation>C</variation>
    <location>
        <position position="123"/>
    </location>
</feature>
<feature type="sequence variant" id="VAR_040937" description="In dbSNP:rs55920129." evidence="9">
    <original>S</original>
    <variation>L</variation>
    <location>
        <position position="213"/>
    </location>
</feature>
<feature type="sequence variant" id="VAR_040938" description="In dbSNP:rs35567155." evidence="9">
    <original>I</original>
    <variation>V</variation>
    <location>
        <position position="263"/>
    </location>
</feature>
<feature type="sequence variant" id="VAR_040939" description="In dbSNP:rs35409692." evidence="9">
    <original>E</original>
    <variation>K</variation>
    <location>
        <position position="451"/>
    </location>
</feature>
<feature type="sequence variant" id="VAR_040940" description="In dbSNP:rs3738000." evidence="6 7 9 10">
    <original>E</original>
    <variation>V</variation>
    <location>
        <position position="488"/>
    </location>
</feature>
<feature type="sequence variant" id="VAR_040941" description="In a colorectal adenocarcinoma sample; somatic mutation; dbSNP:rs140599545." evidence="9">
    <original>E</original>
    <variation>K</variation>
    <location>
        <position position="492"/>
    </location>
</feature>
<feature type="sequence variant" id="VAR_040942" description="In dbSNP:rs55813244." evidence="9">
    <original>M</original>
    <variation>T</variation>
    <location>
        <position position="548"/>
    </location>
</feature>
<feature type="sequence variant" id="VAR_033907" description="In dbSNP:rs16836266." evidence="9">
    <original>V</original>
    <variation>A</variation>
    <location>
        <position position="562"/>
    </location>
</feature>
<feature type="sequence variant" id="VAR_040943" description="In dbSNP:rs55944737." evidence="9">
    <original>E</original>
    <variation>K</variation>
    <location>
        <position position="606"/>
    </location>
</feature>
<feature type="sequence variant" id="VAR_040944" description="In a colorectal adenocarcinoma sample; somatic mutation; dbSNP:rs765563230." evidence="9">
    <original>D</original>
    <variation>N</variation>
    <location>
        <position position="617"/>
    </location>
</feature>
<feature type="mutagenesis site" description="Loss of kinase activity." evidence="6">
    <original>K</original>
    <variation>R</variation>
    <location>
        <position position="61"/>
    </location>
</feature>
<keyword id="KW-0025">Alternative splicing</keyword>
<keyword id="KW-0067">ATP-binding</keyword>
<keyword id="KW-0131">Cell cycle</keyword>
<keyword id="KW-0175">Coiled coil</keyword>
<keyword id="KW-0418">Kinase</keyword>
<keyword id="KW-0460">Magnesium</keyword>
<keyword id="KW-0464">Manganese</keyword>
<keyword id="KW-0479">Metal-binding</keyword>
<keyword id="KW-0547">Nucleotide-binding</keyword>
<keyword id="KW-0539">Nucleus</keyword>
<keyword id="KW-0597">Phosphoprotein</keyword>
<keyword id="KW-1267">Proteomics identification</keyword>
<keyword id="KW-1185">Reference proteome</keyword>
<keyword id="KW-0723">Serine/threonine-protein kinase</keyword>
<keyword id="KW-0808">Transferase</keyword>
<accession>Q8NG66</accession>
<accession>A6NHD7</accession>
<accession>Q5JPC0</accession>
<accession>Q8NG65</accession>
<accession>Q8TBY1</accession>
<accession>Q9H5F4</accession>
<proteinExistence type="evidence at protein level"/>
<organism>
    <name type="scientific">Homo sapiens</name>
    <name type="common">Human</name>
    <dbReference type="NCBI Taxonomy" id="9606"/>
    <lineage>
        <taxon>Eukaryota</taxon>
        <taxon>Metazoa</taxon>
        <taxon>Chordata</taxon>
        <taxon>Craniata</taxon>
        <taxon>Vertebrata</taxon>
        <taxon>Euteleostomi</taxon>
        <taxon>Mammalia</taxon>
        <taxon>Eutheria</taxon>
        <taxon>Euarchontoglires</taxon>
        <taxon>Primates</taxon>
        <taxon>Haplorrhini</taxon>
        <taxon>Catarrhini</taxon>
        <taxon>Hominidae</taxon>
        <taxon>Homo</taxon>
    </lineage>
</organism>